<dbReference type="EC" id="2.7.7.89" evidence="1"/>
<dbReference type="EC" id="2.7.7.42" evidence="1"/>
<dbReference type="EMBL" id="CP000668">
    <property type="protein sequence ID" value="ABP38850.1"/>
    <property type="molecule type" value="Genomic_DNA"/>
</dbReference>
<dbReference type="RefSeq" id="WP_002212194.1">
    <property type="nucleotide sequence ID" value="NZ_CP009715.1"/>
</dbReference>
<dbReference type="SMR" id="A4THT8"/>
<dbReference type="GeneID" id="57973971"/>
<dbReference type="KEGG" id="ypp:YPDSF_0437"/>
<dbReference type="PATRIC" id="fig|386656.14.peg.1744"/>
<dbReference type="GO" id="GO:0005829">
    <property type="term" value="C:cytosol"/>
    <property type="evidence" value="ECO:0007669"/>
    <property type="project" value="TreeGrafter"/>
</dbReference>
<dbReference type="GO" id="GO:0008882">
    <property type="term" value="F:[glutamate-ammonia-ligase] adenylyltransferase activity"/>
    <property type="evidence" value="ECO:0007669"/>
    <property type="project" value="UniProtKB-UniRule"/>
</dbReference>
<dbReference type="GO" id="GO:0047388">
    <property type="term" value="F:[glutamine synthetase]-adenylyl-L-tyrosine phosphorylase activity"/>
    <property type="evidence" value="ECO:0007669"/>
    <property type="project" value="UniProtKB-EC"/>
</dbReference>
<dbReference type="GO" id="GO:0005524">
    <property type="term" value="F:ATP binding"/>
    <property type="evidence" value="ECO:0007669"/>
    <property type="project" value="UniProtKB-UniRule"/>
</dbReference>
<dbReference type="GO" id="GO:0000287">
    <property type="term" value="F:magnesium ion binding"/>
    <property type="evidence" value="ECO:0007669"/>
    <property type="project" value="UniProtKB-UniRule"/>
</dbReference>
<dbReference type="GO" id="GO:0000820">
    <property type="term" value="P:regulation of glutamine family amino acid metabolic process"/>
    <property type="evidence" value="ECO:0007669"/>
    <property type="project" value="UniProtKB-UniRule"/>
</dbReference>
<dbReference type="CDD" id="cd05401">
    <property type="entry name" value="NT_GlnE_GlnD_like"/>
    <property type="match status" value="2"/>
</dbReference>
<dbReference type="FunFam" id="1.10.4050.10:FF:000001">
    <property type="entry name" value="Bifunctional glutamine synthetase adenylyltransferase/adenylyl-removing enzyme"/>
    <property type="match status" value="1"/>
</dbReference>
<dbReference type="FunFam" id="1.20.120.1510:FF:000001">
    <property type="entry name" value="Bifunctional glutamine synthetase adenylyltransferase/adenylyl-removing enzyme"/>
    <property type="match status" value="1"/>
</dbReference>
<dbReference type="FunFam" id="1.20.120.330:FF:000005">
    <property type="entry name" value="Bifunctional glutamine synthetase adenylyltransferase/adenylyl-removing enzyme"/>
    <property type="match status" value="1"/>
</dbReference>
<dbReference type="FunFam" id="1.20.120.330:FF:000008">
    <property type="entry name" value="Bifunctional glutamine synthetase adenylyltransferase/adenylyl-removing enzyme"/>
    <property type="match status" value="1"/>
</dbReference>
<dbReference type="FunFam" id="3.30.460.10:FF:000009">
    <property type="entry name" value="Bifunctional glutamine synthetase adenylyltransferase/adenylyl-removing enzyme"/>
    <property type="match status" value="1"/>
</dbReference>
<dbReference type="FunFam" id="3.30.460.10:FF:000014">
    <property type="entry name" value="Bifunctional glutamine synthetase adenylyltransferase/adenylyl-removing enzyme"/>
    <property type="match status" value="1"/>
</dbReference>
<dbReference type="Gene3D" id="1.20.120.1510">
    <property type="match status" value="1"/>
</dbReference>
<dbReference type="Gene3D" id="3.30.460.10">
    <property type="entry name" value="Beta Polymerase, domain 2"/>
    <property type="match status" value="2"/>
</dbReference>
<dbReference type="Gene3D" id="1.10.4050.10">
    <property type="entry name" value="Glutamine synthase adenylyltransferase GlnE"/>
    <property type="match status" value="1"/>
</dbReference>
<dbReference type="Gene3D" id="1.20.120.330">
    <property type="entry name" value="Nucleotidyltransferases domain 2"/>
    <property type="match status" value="2"/>
</dbReference>
<dbReference type="HAMAP" id="MF_00802">
    <property type="entry name" value="GlnE"/>
    <property type="match status" value="1"/>
</dbReference>
<dbReference type="InterPro" id="IPR023057">
    <property type="entry name" value="GlnE"/>
</dbReference>
<dbReference type="InterPro" id="IPR005190">
    <property type="entry name" value="GlnE_rpt_dom"/>
</dbReference>
<dbReference type="InterPro" id="IPR043519">
    <property type="entry name" value="NT_sf"/>
</dbReference>
<dbReference type="InterPro" id="IPR013546">
    <property type="entry name" value="PII_UdlTrfase/GS_AdlTrfase"/>
</dbReference>
<dbReference type="NCBIfam" id="NF008292">
    <property type="entry name" value="PRK11072.1"/>
    <property type="match status" value="1"/>
</dbReference>
<dbReference type="PANTHER" id="PTHR30621:SF0">
    <property type="entry name" value="BIFUNCTIONAL GLUTAMINE SYNTHETASE ADENYLYLTRANSFERASE_ADENYLYL-REMOVING ENZYME"/>
    <property type="match status" value="1"/>
</dbReference>
<dbReference type="PANTHER" id="PTHR30621">
    <property type="entry name" value="GLUTAMINE SYNTHETASE ADENYLYLTRANSFERASE"/>
    <property type="match status" value="1"/>
</dbReference>
<dbReference type="Pfam" id="PF08335">
    <property type="entry name" value="GlnD_UR_UTase"/>
    <property type="match status" value="2"/>
</dbReference>
<dbReference type="Pfam" id="PF03710">
    <property type="entry name" value="GlnE"/>
    <property type="match status" value="2"/>
</dbReference>
<dbReference type="SUPFAM" id="SSF81301">
    <property type="entry name" value="Nucleotidyltransferase"/>
    <property type="match status" value="2"/>
</dbReference>
<dbReference type="SUPFAM" id="SSF81593">
    <property type="entry name" value="Nucleotidyltransferase substrate binding subunit/domain"/>
    <property type="match status" value="2"/>
</dbReference>
<reference key="1">
    <citation type="submission" date="2007-02" db="EMBL/GenBank/DDBJ databases">
        <title>Complete sequence of chromosome of Yersinia pestis Pestoides F.</title>
        <authorList>
            <consortium name="US DOE Joint Genome Institute"/>
            <person name="Copeland A."/>
            <person name="Lucas S."/>
            <person name="Lapidus A."/>
            <person name="Barry K."/>
            <person name="Detter J.C."/>
            <person name="Glavina del Rio T."/>
            <person name="Hammon N."/>
            <person name="Israni S."/>
            <person name="Dalin E."/>
            <person name="Tice H."/>
            <person name="Pitluck S."/>
            <person name="Di Bartolo G."/>
            <person name="Chain P."/>
            <person name="Malfatti S."/>
            <person name="Shin M."/>
            <person name="Vergez L."/>
            <person name="Schmutz J."/>
            <person name="Larimer F."/>
            <person name="Land M."/>
            <person name="Hauser L."/>
            <person name="Worsham P."/>
            <person name="Chu M."/>
            <person name="Bearden S."/>
            <person name="Garcia E."/>
            <person name="Richardson P."/>
        </authorList>
    </citation>
    <scope>NUCLEOTIDE SEQUENCE [LARGE SCALE GENOMIC DNA]</scope>
    <source>
        <strain>Pestoides F</strain>
    </source>
</reference>
<accession>A4THT8</accession>
<sequence length="951" mass="108330">MLPLPSELQIQAQSIKQRFSELPAPPDLRDEDIAVLALSDFVSDMLLIHPQWLEELHQQPPQPQEWQYYSQWLSQALAGVQDEAALLTALRLFRRRVMVRIAWSQVLQTSGTAETLQQLSTLAESMIIAARDWLYQVCCRELGTPCNRQGVPQPLLILGMGKLGGGELNFSSDIDLIFAYPENGQTQGGRRELDNAQFFTRLGQRLIKALDQHTIDGFVYRVDMRLRPFGDSGPLVLSFAALEDYYQEQGRDWERYAMVKARLMGGADDPYSQELRQMLRPFVFRRYIDFSVIQSLRNMKGMIAREVRRRGLKDNIKLGAGGIREIEFITQVFQLIRGGREPRLQERALLPTLQAVAELGLLPEQQVADLSGSYLFLRRLENLLQAIADEQTQTLPNDPLNQARLAWGMGYADWAAMSTALENHMQAVRVVFDDLIGDETPDIGEDPSHGLYKSLWQDVLEESDLAPLTPHLEEAARRQLLATISGFRHDVDKRTIGPRGREVLDQLMPRLFAEVCPRPDANVALSRLILLLLSIVTRTTYLELLVEYHAALKHVIRLCSASPMVASQLARYPLLLDELLDPQSLYQPLAPSAYRDELRQYLLRVPEDDEEQQLEALRQFKQAQQLRIAAGDITEALPVMKVSDHLTYLAEAIIDAVIQQAWNQMVARYGQPSHLQQSEGRGFAVIGYGKLGGWELGYSSDLDLVFLLDCPLDVMTDGDRSIDGRQFYLRLAQRIMHLFSTRTSSGILYEVDARLRPSGEAGMLVSTIEAFADYQRNEAWTWEHQALVRARIVYGSPKLHQQFDAIRQQILCRHREDPQLQQEVREMREKMRNHLGSKQRDIFDIKADAGGITDIEFIAQYLVLRYAASEPRLTRWSDNVRIFESMAHYDIMSPEEAAALTRAYVTMRDEIHHLALQEQSSKVAADSFIAEREQVAASWHKWLAANDANVS</sequence>
<keyword id="KW-0067">ATP-binding</keyword>
<keyword id="KW-0460">Magnesium</keyword>
<keyword id="KW-0511">Multifunctional enzyme</keyword>
<keyword id="KW-0547">Nucleotide-binding</keyword>
<keyword id="KW-0548">Nucleotidyltransferase</keyword>
<keyword id="KW-0808">Transferase</keyword>
<protein>
    <recommendedName>
        <fullName evidence="1">Bifunctional glutamine synthetase adenylyltransferase/adenylyl-removing enzyme</fullName>
    </recommendedName>
    <alternativeName>
        <fullName evidence="1">ATP:glutamine synthetase adenylyltransferase</fullName>
    </alternativeName>
    <alternativeName>
        <fullName evidence="1">ATase</fullName>
    </alternativeName>
    <domain>
        <recommendedName>
            <fullName evidence="1">Glutamine synthetase adenylyl-L-tyrosine phosphorylase</fullName>
            <ecNumber evidence="1">2.7.7.89</ecNumber>
        </recommendedName>
        <alternativeName>
            <fullName evidence="1">Adenylyl removase</fullName>
            <shortName evidence="1">AR</shortName>
            <shortName evidence="1">AT-N</shortName>
        </alternativeName>
    </domain>
    <domain>
        <recommendedName>
            <fullName evidence="1">Glutamine synthetase adenylyl transferase</fullName>
            <ecNumber evidence="1">2.7.7.42</ecNumber>
        </recommendedName>
        <alternativeName>
            <fullName evidence="1">Adenylyl transferase</fullName>
            <shortName evidence="1">AT</shortName>
            <shortName evidence="1">AT-C</shortName>
        </alternativeName>
    </domain>
</protein>
<name>GLNE_YERPP</name>
<comment type="function">
    <text evidence="1">Involved in the regulation of glutamine synthetase GlnA, a key enzyme in the process to assimilate ammonia. When cellular nitrogen levels are high, the C-terminal adenylyl transferase (AT) inactivates GlnA by covalent transfer of an adenylyl group from ATP to specific tyrosine residue of GlnA, thus reducing its activity. Conversely, when nitrogen levels are low, the N-terminal adenylyl removase (AR) activates GlnA by removing the adenylyl group by phosphorolysis, increasing its activity. The regulatory region of GlnE binds the signal transduction protein PII (GlnB) which indicates the nitrogen status of the cell.</text>
</comment>
<comment type="catalytic activity">
    <reaction evidence="1">
        <text>[glutamine synthetase]-O(4)-(5'-adenylyl)-L-tyrosine + phosphate = [glutamine synthetase]-L-tyrosine + ADP</text>
        <dbReference type="Rhea" id="RHEA:43716"/>
        <dbReference type="Rhea" id="RHEA-COMP:10660"/>
        <dbReference type="Rhea" id="RHEA-COMP:10661"/>
        <dbReference type="ChEBI" id="CHEBI:43474"/>
        <dbReference type="ChEBI" id="CHEBI:46858"/>
        <dbReference type="ChEBI" id="CHEBI:83624"/>
        <dbReference type="ChEBI" id="CHEBI:456216"/>
        <dbReference type="EC" id="2.7.7.89"/>
    </reaction>
</comment>
<comment type="catalytic activity">
    <reaction evidence="1">
        <text>[glutamine synthetase]-L-tyrosine + ATP = [glutamine synthetase]-O(4)-(5'-adenylyl)-L-tyrosine + diphosphate</text>
        <dbReference type="Rhea" id="RHEA:18589"/>
        <dbReference type="Rhea" id="RHEA-COMP:10660"/>
        <dbReference type="Rhea" id="RHEA-COMP:10661"/>
        <dbReference type="ChEBI" id="CHEBI:30616"/>
        <dbReference type="ChEBI" id="CHEBI:33019"/>
        <dbReference type="ChEBI" id="CHEBI:46858"/>
        <dbReference type="ChEBI" id="CHEBI:83624"/>
        <dbReference type="EC" id="2.7.7.42"/>
    </reaction>
</comment>
<comment type="cofactor">
    <cofactor evidence="1">
        <name>Mg(2+)</name>
        <dbReference type="ChEBI" id="CHEBI:18420"/>
    </cofactor>
</comment>
<comment type="similarity">
    <text evidence="1">Belongs to the GlnE family.</text>
</comment>
<proteinExistence type="inferred from homology"/>
<organism>
    <name type="scientific">Yersinia pestis (strain Pestoides F)</name>
    <dbReference type="NCBI Taxonomy" id="386656"/>
    <lineage>
        <taxon>Bacteria</taxon>
        <taxon>Pseudomonadati</taxon>
        <taxon>Pseudomonadota</taxon>
        <taxon>Gammaproteobacteria</taxon>
        <taxon>Enterobacterales</taxon>
        <taxon>Yersiniaceae</taxon>
        <taxon>Yersinia</taxon>
    </lineage>
</organism>
<evidence type="ECO:0000255" key="1">
    <source>
        <dbReference type="HAMAP-Rule" id="MF_00802"/>
    </source>
</evidence>
<gene>
    <name evidence="1" type="primary">glnE</name>
    <name type="ordered locus">YPDSF_0437</name>
</gene>
<feature type="chain" id="PRO_1000047023" description="Bifunctional glutamine synthetase adenylyltransferase/adenylyl-removing enzyme">
    <location>
        <begin position="1"/>
        <end position="951"/>
    </location>
</feature>
<feature type="region of interest" description="Adenylyl removase" evidence="1">
    <location>
        <begin position="1"/>
        <end position="440"/>
    </location>
</feature>
<feature type="region of interest" description="Adenylyl transferase" evidence="1">
    <location>
        <begin position="449"/>
        <end position="951"/>
    </location>
</feature>